<organism>
    <name type="scientific">Ovis aries</name>
    <name type="common">Sheep</name>
    <dbReference type="NCBI Taxonomy" id="9940"/>
    <lineage>
        <taxon>Eukaryota</taxon>
        <taxon>Metazoa</taxon>
        <taxon>Chordata</taxon>
        <taxon>Craniata</taxon>
        <taxon>Vertebrata</taxon>
        <taxon>Euteleostomi</taxon>
        <taxon>Mammalia</taxon>
        <taxon>Eutheria</taxon>
        <taxon>Laurasiatheria</taxon>
        <taxon>Artiodactyla</taxon>
        <taxon>Ruminantia</taxon>
        <taxon>Pecora</taxon>
        <taxon>Bovidae</taxon>
        <taxon>Caprinae</taxon>
        <taxon>Ovis</taxon>
    </lineage>
</organism>
<keyword id="KW-1003">Cell membrane</keyword>
<keyword id="KW-1015">Disulfide bond</keyword>
<keyword id="KW-0325">Glycoprotein</keyword>
<keyword id="KW-0472">Membrane</keyword>
<keyword id="KW-0597">Phosphoprotein</keyword>
<keyword id="KW-0675">Receptor</keyword>
<keyword id="KW-1185">Reference proteome</keyword>
<keyword id="KW-0677">Repeat</keyword>
<keyword id="KW-0732">Signal</keyword>
<keyword id="KW-0812">Transmembrane</keyword>
<keyword id="KW-1133">Transmembrane helix</keyword>
<proteinExistence type="evidence at transcript level"/>
<gene>
    <name type="primary">IFNAR2</name>
    <name type="synonym">IFNARB</name>
</gene>
<name>INAR2_SHEEP</name>
<feature type="signal peptide" evidence="1">
    <location>
        <begin position="1"/>
        <end position="26"/>
    </location>
</feature>
<feature type="chain" id="PRO_0000011008" description="Interferon alpha/beta receptor 2">
    <location>
        <begin position="27"/>
        <end position="536"/>
    </location>
</feature>
<feature type="topological domain" description="Extracellular" evidence="4">
    <location>
        <begin position="27"/>
        <end position="246"/>
    </location>
</feature>
<feature type="transmembrane region" description="Helical" evidence="4">
    <location>
        <begin position="247"/>
        <end position="267"/>
    </location>
</feature>
<feature type="topological domain" description="Cytoplasmic" evidence="4">
    <location>
        <begin position="268"/>
        <end position="536"/>
    </location>
</feature>
<feature type="repeat" description="1">
    <location>
        <begin position="358"/>
        <end position="362"/>
    </location>
</feature>
<feature type="repeat" description="2">
    <location>
        <begin position="363"/>
        <end position="367"/>
    </location>
</feature>
<feature type="repeat" description="3">
    <location>
        <begin position="368"/>
        <end position="372"/>
    </location>
</feature>
<feature type="region of interest" description="3 X 5 AA tandem repeats of S-L-E-D-C">
    <location>
        <begin position="358"/>
        <end position="372"/>
    </location>
</feature>
<feature type="region of interest" description="Disordered" evidence="5">
    <location>
        <begin position="369"/>
        <end position="434"/>
    </location>
</feature>
<feature type="region of interest" description="Mediates interaction with STAT2 (and required for the recruitment of USP18)" evidence="3">
    <location>
        <begin position="432"/>
        <end position="456"/>
    </location>
</feature>
<feature type="region of interest" description="Disordered" evidence="5">
    <location>
        <begin position="487"/>
        <end position="522"/>
    </location>
</feature>
<feature type="compositionally biased region" description="Acidic residues" evidence="5">
    <location>
        <begin position="420"/>
        <end position="429"/>
    </location>
</feature>
<feature type="modified residue" description="Phosphotyrosine" evidence="3">
    <location>
        <position position="340"/>
    </location>
</feature>
<feature type="modified residue" description="Phosphoserine" evidence="2">
    <location>
        <position position="480"/>
    </location>
</feature>
<feature type="modified residue" description="Phosphotyrosine" evidence="3">
    <location>
        <position position="525"/>
    </location>
</feature>
<feature type="glycosylation site" description="N-linked (GlcNAc...) asparagine" evidence="4">
    <location>
        <position position="58"/>
    </location>
</feature>
<feature type="glycosylation site" description="N-linked (GlcNAc...) asparagine" evidence="4">
    <location>
        <position position="87"/>
    </location>
</feature>
<feature type="glycosylation site" description="N-linked (GlcNAc...) asparagine" evidence="4">
    <location>
        <position position="101"/>
    </location>
</feature>
<feature type="glycosylation site" description="N-linked (GlcNAc...) asparagine" evidence="4">
    <location>
        <position position="147"/>
    </location>
</feature>
<feature type="glycosylation site" description="N-linked (GlcNAc...) asparagine" evidence="4">
    <location>
        <position position="191"/>
    </location>
</feature>
<feature type="disulfide bond" evidence="3">
    <location>
        <begin position="39"/>
        <end position="122"/>
    </location>
</feature>
<feature type="disulfide bond" evidence="3">
    <location>
        <begin position="85"/>
        <end position="93"/>
    </location>
</feature>
<feature type="disulfide bond" evidence="3">
    <location>
        <begin position="210"/>
        <end position="230"/>
    </location>
</feature>
<accession>Q95207</accession>
<comment type="function">
    <text evidence="3">Together with IFNAR1, forms the heterodimeric receptor for type I interferons (including interferons alpha, beta, epsilon, omega and kappa). Type I interferon binding activates the JAK-STAT signaling cascade, resulting in transcriptional activation or repression of interferon-regulated genes that encode the effectors of the interferon response. Mechanistically, type I interferon-binding brings the IFNAR1 and IFNAR2 subunits into close proximity with one another, driving their associated Janus kinases (JAKs) (TYK2 bound to IFNAR1 and JAK1 bound to IFNAR2) to cross-phosphorylate one another. The activated kinases phosphorylate specific tyrosine residues on the intracellular domains of IFNAR1 and IFNAR2, forming docking sites for the STAT transcription factors (STAT1, STAT2 and STAT). STAT proteins are then phosphorylated by the JAKs, promoting their translocation into the nucleus to regulate expression of interferon-regulated genes.</text>
</comment>
<comment type="subunit">
    <text evidence="3">Heterodimer with IFNAR1; forming the receptor for type I interferon. Interacts with the transcriptional factors STAT1 and STAT2. Interacts with JAK1. Interacts with USP18; indirectly via STAT2, it negatively regulates the assembly of the ternary interferon-IFNAR1-IFNAR2 complex and therefore type I interferon signaling.</text>
</comment>
<comment type="subcellular location">
    <subcellularLocation>
        <location evidence="3">Cell membrane</location>
        <topology evidence="3">Single-pass type I membrane protein</topology>
    </subcellularLocation>
</comment>
<comment type="tissue specificity">
    <text evidence="6">Expressed in the endometrium. Expressed in all tissues examined except conceptus at day 15 of pregnancy.</text>
</comment>
<comment type="PTM">
    <text evidence="3">Phosphorylated on tyrosine residues upon interferon binding. Phosphorylation at Tyr-340 or Tyr-525 are sufficient to mediate interferon dependent activation of STAT1, STAT2 and STAT3 leading to antiproliferative effects on many different cell types (By similarity).</text>
</comment>
<comment type="similarity">
    <text evidence="7">Belongs to the type II cytokine receptor family.</text>
</comment>
<protein>
    <recommendedName>
        <fullName>Interferon alpha/beta receptor 2</fullName>
        <shortName>IFN-R-2</shortName>
        <shortName>IFN-alpha/beta receptor 2</shortName>
    </recommendedName>
    <alternativeName>
        <fullName>Type I interferon receptor 2</fullName>
    </alternativeName>
</protein>
<reference key="1">
    <citation type="journal article" date="1997" name="Endocrinology">
        <title>Molecular cloning of ovine and bovine type I interferon receptor subunits from uteri, and endometrial expression of messenger ribonucleic acid for ovine receptors during the estrous cycle and pregnancy.</title>
        <authorList>
            <person name="Han C.-S."/>
            <person name="Mathialagan N."/>
            <person name="Klemann S.W."/>
            <person name="Roberts R.M."/>
        </authorList>
    </citation>
    <scope>NUCLEOTIDE SEQUENCE [MRNA]</scope>
    <scope>TISSUE SPECIFICITY</scope>
    <source>
        <tissue>Endometrium</tissue>
    </source>
</reference>
<dbReference type="EMBL" id="U65979">
    <property type="protein sequence ID" value="AAB84232.1"/>
    <property type="molecule type" value="mRNA"/>
</dbReference>
<dbReference type="RefSeq" id="NP_001009342.1">
    <property type="nucleotide sequence ID" value="NM_001009342.1"/>
</dbReference>
<dbReference type="SMR" id="Q95207"/>
<dbReference type="STRING" id="9940.ENSOARP00000014268"/>
<dbReference type="GlyCosmos" id="Q95207">
    <property type="glycosylation" value="5 sites, No reported glycans"/>
</dbReference>
<dbReference type="PaxDb" id="9940-ENSOARP00000014268"/>
<dbReference type="Ensembl" id="ENSOART00180014080">
    <property type="protein sequence ID" value="ENSOARP00180007475"/>
    <property type="gene ID" value="ENSOARG00180008482"/>
</dbReference>
<dbReference type="Ensembl" id="ENSOART00215076531">
    <property type="protein sequence ID" value="ENSOARP00215041609"/>
    <property type="gene ID" value="ENSOARG00215045162"/>
</dbReference>
<dbReference type="Ensembl" id="ENSOART00225067922">
    <property type="protein sequence ID" value="ENSOARP00225034667"/>
    <property type="gene ID" value="ENSOARG00225040904"/>
</dbReference>
<dbReference type="Ensembl" id="ENSOART00260001463">
    <property type="protein sequence ID" value="ENSOARP00260000880"/>
    <property type="gene ID" value="ENSOARG00260000851"/>
</dbReference>
<dbReference type="GeneID" id="443363"/>
<dbReference type="KEGG" id="oas:443363"/>
<dbReference type="CTD" id="3455"/>
<dbReference type="eggNOG" id="ENOG502S60E">
    <property type="taxonomic scope" value="Eukaryota"/>
</dbReference>
<dbReference type="OrthoDB" id="8947665at2759"/>
<dbReference type="Proteomes" id="UP000002356">
    <property type="component" value="Unplaced"/>
</dbReference>
<dbReference type="GO" id="GO:0005886">
    <property type="term" value="C:plasma membrane"/>
    <property type="evidence" value="ECO:0000250"/>
    <property type="project" value="UniProtKB"/>
</dbReference>
<dbReference type="GO" id="GO:0042018">
    <property type="term" value="F:interleukin-22 receptor activity"/>
    <property type="evidence" value="ECO:0007669"/>
    <property type="project" value="TreeGrafter"/>
</dbReference>
<dbReference type="GO" id="GO:0004905">
    <property type="term" value="F:type I interferon receptor activity"/>
    <property type="evidence" value="ECO:0000250"/>
    <property type="project" value="UniProtKB"/>
</dbReference>
<dbReference type="GO" id="GO:0051607">
    <property type="term" value="P:defense response to virus"/>
    <property type="evidence" value="ECO:0000250"/>
    <property type="project" value="UniProtKB"/>
</dbReference>
<dbReference type="GO" id="GO:0035455">
    <property type="term" value="P:response to interferon-alpha"/>
    <property type="evidence" value="ECO:0000250"/>
    <property type="project" value="UniProtKB"/>
</dbReference>
<dbReference type="GO" id="GO:0035456">
    <property type="term" value="P:response to interferon-beta"/>
    <property type="evidence" value="ECO:0000250"/>
    <property type="project" value="UniProtKB"/>
</dbReference>
<dbReference type="GO" id="GO:0060337">
    <property type="term" value="P:type I interferon-mediated signaling pathway"/>
    <property type="evidence" value="ECO:0000250"/>
    <property type="project" value="UniProtKB"/>
</dbReference>
<dbReference type="FunFam" id="2.60.40.10:FF:000909">
    <property type="entry name" value="Interferon alpha/beta receptor 2"/>
    <property type="match status" value="1"/>
</dbReference>
<dbReference type="FunFam" id="2.60.40.10:FF:001156">
    <property type="entry name" value="Interferon alpha/beta receptor 2"/>
    <property type="match status" value="1"/>
</dbReference>
<dbReference type="Gene3D" id="2.60.40.10">
    <property type="entry name" value="Immunoglobulins"/>
    <property type="match status" value="2"/>
</dbReference>
<dbReference type="InterPro" id="IPR003961">
    <property type="entry name" value="FN3_dom"/>
</dbReference>
<dbReference type="InterPro" id="IPR036116">
    <property type="entry name" value="FN3_sf"/>
</dbReference>
<dbReference type="InterPro" id="IPR013783">
    <property type="entry name" value="Ig-like_fold"/>
</dbReference>
<dbReference type="InterPro" id="IPR015373">
    <property type="entry name" value="Interferon/interleukin_rcp_dom"/>
</dbReference>
<dbReference type="InterPro" id="IPR050650">
    <property type="entry name" value="Type-II_Cytokine-TF_Rcpt"/>
</dbReference>
<dbReference type="PANTHER" id="PTHR20859:SF84">
    <property type="entry name" value="INTERFERON ALPHA_BETA RECEPTOR 2"/>
    <property type="match status" value="1"/>
</dbReference>
<dbReference type="PANTHER" id="PTHR20859">
    <property type="entry name" value="INTERFERON/INTERLEUKIN RECEPTOR"/>
    <property type="match status" value="1"/>
</dbReference>
<dbReference type="Pfam" id="PF09294">
    <property type="entry name" value="Interfer-bind"/>
    <property type="match status" value="1"/>
</dbReference>
<dbReference type="Pfam" id="PF01108">
    <property type="entry name" value="Tissue_fac"/>
    <property type="match status" value="1"/>
</dbReference>
<dbReference type="SUPFAM" id="SSF49265">
    <property type="entry name" value="Fibronectin type III"/>
    <property type="match status" value="2"/>
</dbReference>
<sequence length="536" mass="60261">MLLSQNVSAIGPLNLYPMVHISLVFGISYVVPDLSDESCTLKMRFRNFQSILSWELKNRSIVPTHYTLWYTIMSKPEDMKVVKDCINITRSFCDLTDVWVNRTDMYISQVVGYRENAVVVSCMGSFFLASDKPLDPPKFEIVDFTNNISVNVKFRLDSPRIPSEELQFYLAFIEEHAGNSVKRHQPQITGNITENFNYVIDKLIPNTNYCISVYFEPKDPRKINRSPLKCILFRPRRESESSEPATIGGILILFLLAAVCISTVMILKRIGYICLRNDFPEALNFYKLSVWVFPELPPLEKMATVEVIHITRKKKEWNYNYDDESDIENEVAPRVNSGGYTKHGLTGRLCPTSTTAASLEDCSLEDCSLEDCSDPSAEEPYLPEPKRDAETPAAPGPGPWQSEGTGGGYQTRGTLWQDPTSEEDSDSTEGSEGRIVFNVNLNSVCVRALEDDKDSEVTLMSPSPPEETAVLEEDLSETESSLLVASEEGTQLPFTDPSMECLRPQDALSDKSDTSESDVDIGDGYIVRQVNLKNFN</sequence>
<evidence type="ECO:0000250" key="1"/>
<evidence type="ECO:0000250" key="2">
    <source>
        <dbReference type="UniProtKB" id="O35664"/>
    </source>
</evidence>
<evidence type="ECO:0000250" key="3">
    <source>
        <dbReference type="UniProtKB" id="P48551"/>
    </source>
</evidence>
<evidence type="ECO:0000255" key="4"/>
<evidence type="ECO:0000256" key="5">
    <source>
        <dbReference type="SAM" id="MobiDB-lite"/>
    </source>
</evidence>
<evidence type="ECO:0000269" key="6">
    <source>
    </source>
</evidence>
<evidence type="ECO:0000305" key="7"/>